<organism>
    <name type="scientific">Dictyostelium discoideum</name>
    <name type="common">Social amoeba</name>
    <dbReference type="NCBI Taxonomy" id="44689"/>
    <lineage>
        <taxon>Eukaryota</taxon>
        <taxon>Amoebozoa</taxon>
        <taxon>Evosea</taxon>
        <taxon>Eumycetozoa</taxon>
        <taxon>Dictyostelia</taxon>
        <taxon>Dictyosteliales</taxon>
        <taxon>Dictyosteliaceae</taxon>
        <taxon>Dictyostelium</taxon>
    </lineage>
</organism>
<sequence>MDTKMTEREKMTKGLMYDPGDEELCKGRTEARQLIHRFNNSMDKLERKDITKQLFGSTGEKIYLEPTLRVDYGYNIHVGENFYANFGAIFLDICPITIGKNAMLAPNVQLYSATHPIDPTERNSGLEFGKPITIGDNAWIGGGAIILPGVTLGDNVVVGSGAVVTRSFGSNVVIAGNPAKVIKEIPVKSE</sequence>
<protein>
    <recommendedName>
        <fullName>Putative acetyltransferase DDB_G0275913</fullName>
        <ecNumber>2.3.1.-</ecNumber>
    </recommendedName>
</protein>
<feature type="chain" id="PRO_0000367261" description="Putative acetyltransferase DDB_G0275913">
    <location>
        <begin position="1"/>
        <end position="190"/>
    </location>
</feature>
<gene>
    <name type="ORF">DDB_G0275913</name>
</gene>
<name>Y5913_DICDI</name>
<keyword id="KW-0012">Acyltransferase</keyword>
<keyword id="KW-1185">Reference proteome</keyword>
<keyword id="KW-0808">Transferase</keyword>
<accession>Q552S7</accession>
<accession>Q86IC2</accession>
<proteinExistence type="inferred from homology"/>
<comment type="similarity">
    <text evidence="1">Belongs to the transferase hexapeptide repeat family.</text>
</comment>
<evidence type="ECO:0000305" key="1"/>
<dbReference type="EC" id="2.3.1.-"/>
<dbReference type="EMBL" id="AAFI02000013">
    <property type="protein sequence ID" value="EAL69707.1"/>
    <property type="molecule type" value="Genomic_DNA"/>
</dbReference>
<dbReference type="RefSeq" id="XP_643604.1">
    <property type="nucleotide sequence ID" value="XM_638512.1"/>
</dbReference>
<dbReference type="SMR" id="Q552S7"/>
<dbReference type="FunCoup" id="Q552S7">
    <property type="interactions" value="150"/>
</dbReference>
<dbReference type="STRING" id="44689.Q552S7"/>
<dbReference type="PaxDb" id="44689-DDB0217720"/>
<dbReference type="EnsemblProtists" id="EAL69707">
    <property type="protein sequence ID" value="EAL69707"/>
    <property type="gene ID" value="DDB_G0275913"/>
</dbReference>
<dbReference type="GeneID" id="8620191"/>
<dbReference type="KEGG" id="ddi:DDB_G0275913"/>
<dbReference type="dictyBase" id="DDB_G0275913"/>
<dbReference type="VEuPathDB" id="AmoebaDB:DDB_G0275913"/>
<dbReference type="eggNOG" id="KOG4750">
    <property type="taxonomic scope" value="Eukaryota"/>
</dbReference>
<dbReference type="HOGENOM" id="CLU_051638_3_0_1"/>
<dbReference type="InParanoid" id="Q552S7"/>
<dbReference type="OMA" id="PFRNMPD"/>
<dbReference type="PhylomeDB" id="Q552S7"/>
<dbReference type="PRO" id="PR:Q552S7"/>
<dbReference type="Proteomes" id="UP000002195">
    <property type="component" value="Chromosome 2"/>
</dbReference>
<dbReference type="GO" id="GO:0016407">
    <property type="term" value="F:acetyltransferase activity"/>
    <property type="evidence" value="ECO:0007669"/>
    <property type="project" value="InterPro"/>
</dbReference>
<dbReference type="GO" id="GO:0008374">
    <property type="term" value="F:O-acyltransferase activity"/>
    <property type="evidence" value="ECO:0000318"/>
    <property type="project" value="GO_Central"/>
</dbReference>
<dbReference type="CDD" id="cd03357">
    <property type="entry name" value="LbH_MAT_GAT"/>
    <property type="match status" value="1"/>
</dbReference>
<dbReference type="FunFam" id="2.160.10.10:FF:000008">
    <property type="entry name" value="Maltose O-acetyltransferase"/>
    <property type="match status" value="1"/>
</dbReference>
<dbReference type="Gene3D" id="2.160.10.10">
    <property type="entry name" value="Hexapeptide repeat proteins"/>
    <property type="match status" value="1"/>
</dbReference>
<dbReference type="InterPro" id="IPR001451">
    <property type="entry name" value="Hexapep"/>
</dbReference>
<dbReference type="InterPro" id="IPR051159">
    <property type="entry name" value="Hexapeptide_acetyltransf"/>
</dbReference>
<dbReference type="InterPro" id="IPR024688">
    <property type="entry name" value="Mac_dom"/>
</dbReference>
<dbReference type="InterPro" id="IPR011004">
    <property type="entry name" value="Trimer_LpxA-like_sf"/>
</dbReference>
<dbReference type="PANTHER" id="PTHR23416:SF23">
    <property type="entry name" value="ACETYLTRANSFERASE C18B11.09C-RELATED"/>
    <property type="match status" value="1"/>
</dbReference>
<dbReference type="PANTHER" id="PTHR23416">
    <property type="entry name" value="SIALIC ACID SYNTHASE-RELATED"/>
    <property type="match status" value="1"/>
</dbReference>
<dbReference type="Pfam" id="PF00132">
    <property type="entry name" value="Hexapep"/>
    <property type="match status" value="1"/>
</dbReference>
<dbReference type="Pfam" id="PF12464">
    <property type="entry name" value="Mac"/>
    <property type="match status" value="1"/>
</dbReference>
<dbReference type="SMART" id="SM01266">
    <property type="entry name" value="Mac"/>
    <property type="match status" value="1"/>
</dbReference>
<dbReference type="SUPFAM" id="SSF51161">
    <property type="entry name" value="Trimeric LpxA-like enzymes"/>
    <property type="match status" value="1"/>
</dbReference>
<reference key="1">
    <citation type="journal article" date="2002" name="Nature">
        <title>Sequence and analysis of chromosome 2 of Dictyostelium discoideum.</title>
        <authorList>
            <person name="Gloeckner G."/>
            <person name="Eichinger L."/>
            <person name="Szafranski K."/>
            <person name="Pachebat J.A."/>
            <person name="Bankier A.T."/>
            <person name="Dear P.H."/>
            <person name="Lehmann R."/>
            <person name="Baumgart C."/>
            <person name="Parra G."/>
            <person name="Abril J.F."/>
            <person name="Guigo R."/>
            <person name="Kumpf K."/>
            <person name="Tunggal B."/>
            <person name="Cox E.C."/>
            <person name="Quail M.A."/>
            <person name="Platzer M."/>
            <person name="Rosenthal A."/>
            <person name="Noegel A.A."/>
        </authorList>
    </citation>
    <scope>NUCLEOTIDE SEQUENCE [LARGE SCALE GENOMIC DNA]</scope>
    <source>
        <strain>AX4</strain>
    </source>
</reference>
<reference key="2">
    <citation type="journal article" date="2005" name="Nature">
        <title>The genome of the social amoeba Dictyostelium discoideum.</title>
        <authorList>
            <person name="Eichinger L."/>
            <person name="Pachebat J.A."/>
            <person name="Gloeckner G."/>
            <person name="Rajandream M.A."/>
            <person name="Sucgang R."/>
            <person name="Berriman M."/>
            <person name="Song J."/>
            <person name="Olsen R."/>
            <person name="Szafranski K."/>
            <person name="Xu Q."/>
            <person name="Tunggal B."/>
            <person name="Kummerfeld S."/>
            <person name="Madera M."/>
            <person name="Konfortov B.A."/>
            <person name="Rivero F."/>
            <person name="Bankier A.T."/>
            <person name="Lehmann R."/>
            <person name="Hamlin N."/>
            <person name="Davies R."/>
            <person name="Gaudet P."/>
            <person name="Fey P."/>
            <person name="Pilcher K."/>
            <person name="Chen G."/>
            <person name="Saunders D."/>
            <person name="Sodergren E.J."/>
            <person name="Davis P."/>
            <person name="Kerhornou A."/>
            <person name="Nie X."/>
            <person name="Hall N."/>
            <person name="Anjard C."/>
            <person name="Hemphill L."/>
            <person name="Bason N."/>
            <person name="Farbrother P."/>
            <person name="Desany B."/>
            <person name="Just E."/>
            <person name="Morio T."/>
            <person name="Rost R."/>
            <person name="Churcher C.M."/>
            <person name="Cooper J."/>
            <person name="Haydock S."/>
            <person name="van Driessche N."/>
            <person name="Cronin A."/>
            <person name="Goodhead I."/>
            <person name="Muzny D.M."/>
            <person name="Mourier T."/>
            <person name="Pain A."/>
            <person name="Lu M."/>
            <person name="Harper D."/>
            <person name="Lindsay R."/>
            <person name="Hauser H."/>
            <person name="James K.D."/>
            <person name="Quiles M."/>
            <person name="Madan Babu M."/>
            <person name="Saito T."/>
            <person name="Buchrieser C."/>
            <person name="Wardroper A."/>
            <person name="Felder M."/>
            <person name="Thangavelu M."/>
            <person name="Johnson D."/>
            <person name="Knights A."/>
            <person name="Loulseged H."/>
            <person name="Mungall K.L."/>
            <person name="Oliver K."/>
            <person name="Price C."/>
            <person name="Quail M.A."/>
            <person name="Urushihara H."/>
            <person name="Hernandez J."/>
            <person name="Rabbinowitsch E."/>
            <person name="Steffen D."/>
            <person name="Sanders M."/>
            <person name="Ma J."/>
            <person name="Kohara Y."/>
            <person name="Sharp S."/>
            <person name="Simmonds M.N."/>
            <person name="Spiegler S."/>
            <person name="Tivey A."/>
            <person name="Sugano S."/>
            <person name="White B."/>
            <person name="Walker D."/>
            <person name="Woodward J.R."/>
            <person name="Winckler T."/>
            <person name="Tanaka Y."/>
            <person name="Shaulsky G."/>
            <person name="Schleicher M."/>
            <person name="Weinstock G.M."/>
            <person name="Rosenthal A."/>
            <person name="Cox E.C."/>
            <person name="Chisholm R.L."/>
            <person name="Gibbs R.A."/>
            <person name="Loomis W.F."/>
            <person name="Platzer M."/>
            <person name="Kay R.R."/>
            <person name="Williams J.G."/>
            <person name="Dear P.H."/>
            <person name="Noegel A.A."/>
            <person name="Barrell B.G."/>
            <person name="Kuspa A."/>
        </authorList>
    </citation>
    <scope>NUCLEOTIDE SEQUENCE [LARGE SCALE GENOMIC DNA]</scope>
    <source>
        <strain>AX4</strain>
    </source>
</reference>